<proteinExistence type="inferred from homology"/>
<dbReference type="EC" id="6.3.2.6" evidence="1"/>
<dbReference type="EMBL" id="CP001037">
    <property type="protein sequence ID" value="ACC81458.1"/>
    <property type="molecule type" value="Genomic_DNA"/>
</dbReference>
<dbReference type="RefSeq" id="WP_012409449.1">
    <property type="nucleotide sequence ID" value="NC_010628.1"/>
</dbReference>
<dbReference type="SMR" id="B2IWK4"/>
<dbReference type="STRING" id="63737.Npun_F2927"/>
<dbReference type="EnsemblBacteria" id="ACC81458">
    <property type="protein sequence ID" value="ACC81458"/>
    <property type="gene ID" value="Npun_F2927"/>
</dbReference>
<dbReference type="KEGG" id="npu:Npun_F2927"/>
<dbReference type="eggNOG" id="COG0152">
    <property type="taxonomic scope" value="Bacteria"/>
</dbReference>
<dbReference type="HOGENOM" id="CLU_061495_2_0_3"/>
<dbReference type="OrthoDB" id="9801549at2"/>
<dbReference type="PhylomeDB" id="B2IWK4"/>
<dbReference type="UniPathway" id="UPA00074">
    <property type="reaction ID" value="UER00131"/>
</dbReference>
<dbReference type="Proteomes" id="UP000001191">
    <property type="component" value="Chromosome"/>
</dbReference>
<dbReference type="GO" id="GO:0005524">
    <property type="term" value="F:ATP binding"/>
    <property type="evidence" value="ECO:0007669"/>
    <property type="project" value="UniProtKB-KW"/>
</dbReference>
<dbReference type="GO" id="GO:0004639">
    <property type="term" value="F:phosphoribosylaminoimidazolesuccinocarboxamide synthase activity"/>
    <property type="evidence" value="ECO:0007669"/>
    <property type="project" value="UniProtKB-UniRule"/>
</dbReference>
<dbReference type="GO" id="GO:0006189">
    <property type="term" value="P:'de novo' IMP biosynthetic process"/>
    <property type="evidence" value="ECO:0007669"/>
    <property type="project" value="UniProtKB-UniRule"/>
</dbReference>
<dbReference type="GO" id="GO:0009236">
    <property type="term" value="P:cobalamin biosynthetic process"/>
    <property type="evidence" value="ECO:0007669"/>
    <property type="project" value="InterPro"/>
</dbReference>
<dbReference type="CDD" id="cd01415">
    <property type="entry name" value="SAICAR_synt_PurC"/>
    <property type="match status" value="1"/>
</dbReference>
<dbReference type="FunFam" id="3.30.470.20:FF:000006">
    <property type="entry name" value="Phosphoribosylaminoimidazole-succinocarboxamide synthase"/>
    <property type="match status" value="1"/>
</dbReference>
<dbReference type="Gene3D" id="3.30.470.20">
    <property type="entry name" value="ATP-grasp fold, B domain"/>
    <property type="match status" value="1"/>
</dbReference>
<dbReference type="Gene3D" id="3.30.200.20">
    <property type="entry name" value="Phosphorylase Kinase, domain 1"/>
    <property type="match status" value="1"/>
</dbReference>
<dbReference type="HAMAP" id="MF_00137">
    <property type="entry name" value="SAICAR_synth"/>
    <property type="match status" value="1"/>
</dbReference>
<dbReference type="InterPro" id="IPR028923">
    <property type="entry name" value="SAICAR_synt/ADE2_N"/>
</dbReference>
<dbReference type="InterPro" id="IPR033934">
    <property type="entry name" value="SAICAR_synt_PurC"/>
</dbReference>
<dbReference type="InterPro" id="IPR001636">
    <property type="entry name" value="SAICAR_synth"/>
</dbReference>
<dbReference type="InterPro" id="IPR050089">
    <property type="entry name" value="SAICAR_synthetase"/>
</dbReference>
<dbReference type="InterPro" id="IPR018236">
    <property type="entry name" value="SAICAR_synthetase_CS"/>
</dbReference>
<dbReference type="NCBIfam" id="TIGR00081">
    <property type="entry name" value="purC"/>
    <property type="match status" value="1"/>
</dbReference>
<dbReference type="PANTHER" id="PTHR43599">
    <property type="entry name" value="MULTIFUNCTIONAL PROTEIN ADE2"/>
    <property type="match status" value="1"/>
</dbReference>
<dbReference type="PANTHER" id="PTHR43599:SF3">
    <property type="entry name" value="SI:DKEY-6E2.2"/>
    <property type="match status" value="1"/>
</dbReference>
<dbReference type="Pfam" id="PF01259">
    <property type="entry name" value="SAICAR_synt"/>
    <property type="match status" value="1"/>
</dbReference>
<dbReference type="SUPFAM" id="SSF56104">
    <property type="entry name" value="SAICAR synthase-like"/>
    <property type="match status" value="1"/>
</dbReference>
<dbReference type="PROSITE" id="PS01057">
    <property type="entry name" value="SAICAR_SYNTHETASE_1"/>
    <property type="match status" value="1"/>
</dbReference>
<dbReference type="PROSITE" id="PS01058">
    <property type="entry name" value="SAICAR_SYNTHETASE_2"/>
    <property type="match status" value="1"/>
</dbReference>
<organism>
    <name type="scientific">Nostoc punctiforme (strain ATCC 29133 / PCC 73102)</name>
    <dbReference type="NCBI Taxonomy" id="63737"/>
    <lineage>
        <taxon>Bacteria</taxon>
        <taxon>Bacillati</taxon>
        <taxon>Cyanobacteriota</taxon>
        <taxon>Cyanophyceae</taxon>
        <taxon>Nostocales</taxon>
        <taxon>Nostocaceae</taxon>
        <taxon>Nostoc</taxon>
    </lineage>
</organism>
<comment type="catalytic activity">
    <reaction evidence="1">
        <text>5-amino-1-(5-phospho-D-ribosyl)imidazole-4-carboxylate + L-aspartate + ATP = (2S)-2-[5-amino-1-(5-phospho-beta-D-ribosyl)imidazole-4-carboxamido]succinate + ADP + phosphate + 2 H(+)</text>
        <dbReference type="Rhea" id="RHEA:22628"/>
        <dbReference type="ChEBI" id="CHEBI:15378"/>
        <dbReference type="ChEBI" id="CHEBI:29991"/>
        <dbReference type="ChEBI" id="CHEBI:30616"/>
        <dbReference type="ChEBI" id="CHEBI:43474"/>
        <dbReference type="ChEBI" id="CHEBI:58443"/>
        <dbReference type="ChEBI" id="CHEBI:77657"/>
        <dbReference type="ChEBI" id="CHEBI:456216"/>
        <dbReference type="EC" id="6.3.2.6"/>
    </reaction>
</comment>
<comment type="pathway">
    <text evidence="1">Purine metabolism; IMP biosynthesis via de novo pathway; 5-amino-1-(5-phospho-D-ribosyl)imidazole-4-carboxamide from 5-amino-1-(5-phospho-D-ribosyl)imidazole-4-carboxylate: step 1/2.</text>
</comment>
<comment type="similarity">
    <text evidence="1">Belongs to the SAICAR synthetase family.</text>
</comment>
<sequence length="245" mass="27785">MSVNSKLYEGKAKILYTTDDPEVLLADFKDDATAFNAQKRGSIQGKGKINCSISSQLFKQLEAYGIKTHFIDSPTPNQMLVKAVKILPLEVVIRNIAAGSLCQQTGLPVGTILKQPLVEFYYKNDHLGDPLLTRDRLYLLELATAEQVDAITHLALQINEFLNKFWQQCGITLVDFKLEFGLDSQQQLLLADEISPDTCRLWDTTEEDSNRRIMDKDRFRRDLGNVEDAYQEVLQRVLKAVETTN</sequence>
<protein>
    <recommendedName>
        <fullName evidence="1">Phosphoribosylaminoimidazole-succinocarboxamide synthase</fullName>
        <ecNumber evidence="1">6.3.2.6</ecNumber>
    </recommendedName>
    <alternativeName>
        <fullName evidence="1">SAICAR synthetase</fullName>
    </alternativeName>
</protein>
<evidence type="ECO:0000255" key="1">
    <source>
        <dbReference type="HAMAP-Rule" id="MF_00137"/>
    </source>
</evidence>
<gene>
    <name evidence="1" type="primary">purC</name>
    <name type="ordered locus">Npun_F2927</name>
</gene>
<feature type="chain" id="PRO_1000095999" description="Phosphoribosylaminoimidazole-succinocarboxamide synthase">
    <location>
        <begin position="1"/>
        <end position="245"/>
    </location>
</feature>
<keyword id="KW-0067">ATP-binding</keyword>
<keyword id="KW-0436">Ligase</keyword>
<keyword id="KW-0547">Nucleotide-binding</keyword>
<keyword id="KW-0658">Purine biosynthesis</keyword>
<keyword id="KW-1185">Reference proteome</keyword>
<reference key="1">
    <citation type="journal article" date="2013" name="Plant Physiol.">
        <title>A Nostoc punctiforme Sugar Transporter Necessary to Establish a Cyanobacterium-Plant Symbiosis.</title>
        <authorList>
            <person name="Ekman M."/>
            <person name="Picossi S."/>
            <person name="Campbell E.L."/>
            <person name="Meeks J.C."/>
            <person name="Flores E."/>
        </authorList>
    </citation>
    <scope>NUCLEOTIDE SEQUENCE [LARGE SCALE GENOMIC DNA]</scope>
    <source>
        <strain>ATCC 29133 / PCC 73102</strain>
    </source>
</reference>
<accession>B2IWK4</accession>
<name>PUR7_NOSP7</name>